<dbReference type="EMBL" id="AC154033">
    <property type="protein sequence ID" value="AAW28571.1"/>
    <property type="molecule type" value="Genomic_DNA"/>
</dbReference>
<dbReference type="SMR" id="Q5NRN4"/>
<dbReference type="GO" id="GO:0005886">
    <property type="term" value="C:plasma membrane"/>
    <property type="evidence" value="ECO:0007669"/>
    <property type="project" value="UniProtKB-SubCell"/>
</dbReference>
<dbReference type="GO" id="GO:0071555">
    <property type="term" value="P:cell wall organization"/>
    <property type="evidence" value="ECO:0007669"/>
    <property type="project" value="UniProtKB-KW"/>
</dbReference>
<dbReference type="InterPro" id="IPR006459">
    <property type="entry name" value="CASP/CASPL"/>
</dbReference>
<dbReference type="InterPro" id="IPR006702">
    <property type="entry name" value="CASP_dom"/>
</dbReference>
<dbReference type="InterPro" id="IPR044173">
    <property type="entry name" value="CASPL"/>
</dbReference>
<dbReference type="NCBIfam" id="TIGR01569">
    <property type="entry name" value="A_tha_TIGR01569"/>
    <property type="match status" value="1"/>
</dbReference>
<dbReference type="PANTHER" id="PTHR36488:SF12">
    <property type="entry name" value="CASP-LIKE PROTEIN"/>
    <property type="match status" value="1"/>
</dbReference>
<dbReference type="PANTHER" id="PTHR36488">
    <property type="entry name" value="CASP-LIKE PROTEIN 1U1"/>
    <property type="match status" value="1"/>
</dbReference>
<dbReference type="Pfam" id="PF04535">
    <property type="entry name" value="CASP_dom"/>
    <property type="match status" value="1"/>
</dbReference>
<gene>
    <name type="ORF">SDM1_58t00016</name>
</gene>
<organism>
    <name type="scientific">Solanum demissum</name>
    <name type="common">Wild potato</name>
    <dbReference type="NCBI Taxonomy" id="50514"/>
    <lineage>
        <taxon>Eukaryota</taxon>
        <taxon>Viridiplantae</taxon>
        <taxon>Streptophyta</taxon>
        <taxon>Embryophyta</taxon>
        <taxon>Tracheophyta</taxon>
        <taxon>Spermatophyta</taxon>
        <taxon>Magnoliopsida</taxon>
        <taxon>eudicotyledons</taxon>
        <taxon>Gunneridae</taxon>
        <taxon>Pentapetalae</taxon>
        <taxon>asterids</taxon>
        <taxon>lamiids</taxon>
        <taxon>Solanales</taxon>
        <taxon>Solanaceae</taxon>
        <taxon>Solanoideae</taxon>
        <taxon>Solaneae</taxon>
        <taxon>Solanum</taxon>
    </lineage>
</organism>
<evidence type="ECO:0000250" key="1"/>
<evidence type="ECO:0000255" key="2"/>
<evidence type="ECO:0000305" key="3"/>
<sequence length="185" mass="19743">MKAVSIEAGEGSKAKRVHGVNRGISVFDLVLRIVALVGTLASAVAMGTADQALSFSTQIVNFEAQYDDIDAFKFFVVSNSITCVYLALSIPISIFHIIRSRAGKSRVLLIVLDAIMLVFLTSGASAAAAIVYLAHNGNTSTNWFSICQQYTDFCQRSAGSLIGSFGAMALMVLLIILSSIALSRR</sequence>
<reference key="1">
    <citation type="submission" date="2004-12" db="EMBL/GenBank/DDBJ databases">
        <authorList>
            <person name="Buell R."/>
            <person name="Liu J."/>
            <person name="Childs K."/>
            <person name="Zaborsky J."/>
            <person name="Tallon L."/>
            <person name="Wirtz U."/>
            <person name="Wei F."/>
            <person name="Kuang H."/>
            <person name="Zhang P."/>
            <person name="Marano M."/>
            <person name="Baker B."/>
        </authorList>
    </citation>
    <scope>NUCLEOTIDE SEQUENCE [LARGE SCALE GENOMIC DNA]</scope>
</reference>
<reference key="2">
    <citation type="journal article" date="2014" name="Plant Physiol.">
        <title>Functional and evolutionary analysis of the CASPARIAN STRIP MEMBRANE DOMAIN PROTEIN family.</title>
        <authorList>
            <person name="Roppolo D."/>
            <person name="Boeckmann B."/>
            <person name="Pfister A."/>
            <person name="Boutet E."/>
            <person name="Rubio M.C."/>
            <person name="Denervaud-Tendon V."/>
            <person name="Vermeer J.E."/>
            <person name="Gheyselinck J."/>
            <person name="Xenarios I."/>
            <person name="Geldner N."/>
        </authorList>
    </citation>
    <scope>GENE FAMILY</scope>
    <scope>NOMENCLATURE</scope>
</reference>
<proteinExistence type="inferred from homology"/>
<protein>
    <recommendedName>
        <fullName>Casparian strip membrane protein 2</fullName>
        <shortName>SdCASP2</shortName>
    </recommendedName>
</protein>
<keyword id="KW-1003">Cell membrane</keyword>
<keyword id="KW-0961">Cell wall biogenesis/degradation</keyword>
<keyword id="KW-0325">Glycoprotein</keyword>
<keyword id="KW-0472">Membrane</keyword>
<keyword id="KW-0812">Transmembrane</keyword>
<keyword id="KW-1133">Transmembrane helix</keyword>
<accession>Q5NRN4</accession>
<name>CASP2_SOLDE</name>
<feature type="chain" id="PRO_0000370728" description="Casparian strip membrane protein 2">
    <location>
        <begin position="1"/>
        <end position="185"/>
    </location>
</feature>
<feature type="topological domain" description="Cytoplasmic" evidence="2">
    <location>
        <begin position="1"/>
        <end position="25"/>
    </location>
</feature>
<feature type="transmembrane region" description="Helical" evidence="2">
    <location>
        <begin position="26"/>
        <end position="46"/>
    </location>
</feature>
<feature type="topological domain" description="Extracellular" evidence="2">
    <location>
        <begin position="47"/>
        <end position="73"/>
    </location>
</feature>
<feature type="transmembrane region" description="Helical" evidence="2">
    <location>
        <begin position="74"/>
        <end position="94"/>
    </location>
</feature>
<feature type="topological domain" description="Cytoplasmic" evidence="2">
    <location>
        <begin position="95"/>
        <end position="106"/>
    </location>
</feature>
<feature type="transmembrane region" description="Helical" evidence="2">
    <location>
        <begin position="107"/>
        <end position="127"/>
    </location>
</feature>
<feature type="topological domain" description="Extracellular" evidence="2">
    <location>
        <begin position="128"/>
        <end position="160"/>
    </location>
</feature>
<feature type="transmembrane region" description="Helical" evidence="2">
    <location>
        <begin position="161"/>
        <end position="181"/>
    </location>
</feature>
<feature type="topological domain" description="Cytoplasmic" evidence="2">
    <location>
        <begin position="182"/>
        <end position="185"/>
    </location>
</feature>
<feature type="glycosylation site" description="N-linked (GlcNAc...) asparagine" evidence="2">
    <location>
        <position position="138"/>
    </location>
</feature>
<comment type="function">
    <text evidence="1">Regulates membrane-cell wall junctions and localized cell wall deposition. Required for establishment of the Casparian strip membrane domain (CSD) and the subsequent formation of Casparian strips, a cell wall modification of the root endodermis that determines an apoplastic barrier between the intraorganismal apoplasm and the extraorganismal apoplasm and prevents lateral diffusion (By similarity).</text>
</comment>
<comment type="subunit">
    <text evidence="1">Homodimer and heterodimers.</text>
</comment>
<comment type="subcellular location">
    <subcellularLocation>
        <location evidence="1">Cell membrane</location>
        <topology evidence="1">Multi-pass membrane protein</topology>
    </subcellularLocation>
    <text evidence="1">Very restricted localization following a belt shape within the plasma membrane which coincides with the position of the Casparian strip membrane domain in the root endodermis.</text>
</comment>
<comment type="similarity">
    <text evidence="3">Belongs to the Casparian strip membrane proteins (CASP) family.</text>
</comment>